<organism>
    <name type="scientific">Ricinus communis</name>
    <name type="common">Castor bean</name>
    <dbReference type="NCBI Taxonomy" id="3988"/>
    <lineage>
        <taxon>Eukaryota</taxon>
        <taxon>Viridiplantae</taxon>
        <taxon>Streptophyta</taxon>
        <taxon>Embryophyta</taxon>
        <taxon>Tracheophyta</taxon>
        <taxon>Spermatophyta</taxon>
        <taxon>Magnoliopsida</taxon>
        <taxon>eudicotyledons</taxon>
        <taxon>Gunneridae</taxon>
        <taxon>Pentapetalae</taxon>
        <taxon>rosids</taxon>
        <taxon>fabids</taxon>
        <taxon>Malpighiales</taxon>
        <taxon>Euphorbiaceae</taxon>
        <taxon>Acalyphoideae</taxon>
        <taxon>Acalypheae</taxon>
        <taxon>Ricinus</taxon>
    </lineage>
</organism>
<reference key="1">
    <citation type="journal article" date="2010" name="Nat. Biotechnol.">
        <title>Draft genome sequence of the oilseed species Ricinus communis.</title>
        <authorList>
            <person name="Chan A.P."/>
            <person name="Crabtree J."/>
            <person name="Zhao Q."/>
            <person name="Lorenzi H."/>
            <person name="Orvis J."/>
            <person name="Puiu D."/>
            <person name="Melake-Berhan A."/>
            <person name="Jones K.M."/>
            <person name="Redman J."/>
            <person name="Chen G."/>
            <person name="Cahoon E.B."/>
            <person name="Gedil M."/>
            <person name="Stanke M."/>
            <person name="Haas B.J."/>
            <person name="Wortman J.R."/>
            <person name="Fraser-Liggett C.M."/>
            <person name="Ravel J."/>
            <person name="Rabinowicz P.D."/>
        </authorList>
    </citation>
    <scope>NUCLEOTIDE SEQUENCE [LARGE SCALE GENOMIC DNA]</scope>
    <source>
        <strain>cv. Hale</strain>
    </source>
</reference>
<reference key="2">
    <citation type="journal article" date="2012" name="Phytochemistry">
        <title>Functional characterization of four sesquiterpene synthases from Ricinus communis (castor bean).</title>
        <authorList>
            <person name="Xie X."/>
            <person name="Kirby J."/>
            <person name="Keasling J.D."/>
        </authorList>
    </citation>
    <scope>GENE NAME</scope>
</reference>
<keyword id="KW-0456">Lyase</keyword>
<keyword id="KW-0460">Magnesium</keyword>
<keyword id="KW-0479">Metal-binding</keyword>
<keyword id="KW-1185">Reference proteome</keyword>
<sequence length="572" mass="65426">MSMIGTKSFFISSSPKVPVGISWGPSSYRTNSSLSVRSPTLTCSISTISQPTRKEPATTKPEIMEELHEGTRKELLTSSSPIATMKLIDSIQRLGVGYYFEEEINTLLDRFLDLETTEDLLATALRFRLLRDNCFPAHSDVFGKFMNKDGKFKESLRKDVWGLLSLYEASYLGTKDEVELVEAMEFTKTCLEEQSIPLMAHKLSRHVSQALDLPRHLRMPRLEARNYIHEYSLESNNSPPLLELAKLEFNAVQSLHQKELIEIVRWWKQLGLVDKLGFARDRPLECYLWTVGIFPEPYNSTCRIELTKTIAILLVIDDIFDTYGSLPDLILFTEAVRRWDLNAMESLPEYMKICYMALYNTTNDIGFMILKRHGLSIVPHLKRTWIDMFEAFLTEAKWFNSGYVPTLEEYLDNGVTTGGTYMALVHSFFLMGQGVNKETVTMMEPYPDLFSLSGRILRLWDDLGTAREEQERGDVACSIECLMREKRISCDDEGRKQVRQLIRSLWTELNGELIAPSAMPLSIINASLNLARTAQVVYQHGDDKKGSSVDNQVQALIYIPISFPKRRDLKLL</sequence>
<name>TPS11_RICCO</name>
<dbReference type="EC" id="4.2.3.-"/>
<dbReference type="EMBL" id="EQ973780">
    <property type="protein sequence ID" value="EEF49134.1"/>
    <property type="molecule type" value="Genomic_DNA"/>
</dbReference>
<dbReference type="SMR" id="B9RHP7"/>
<dbReference type="STRING" id="3988.B9RHP7"/>
<dbReference type="eggNOG" id="ENOG502QW72">
    <property type="taxonomic scope" value="Eukaryota"/>
</dbReference>
<dbReference type="InParanoid" id="B9RHP7"/>
<dbReference type="OMA" id="HAFNISR"/>
<dbReference type="OrthoDB" id="1936865at2759"/>
<dbReference type="Proteomes" id="UP000008311">
    <property type="component" value="Unassembled WGS sequence"/>
</dbReference>
<dbReference type="GO" id="GO:0000287">
    <property type="term" value="F:magnesium ion binding"/>
    <property type="evidence" value="ECO:0007669"/>
    <property type="project" value="InterPro"/>
</dbReference>
<dbReference type="GO" id="GO:0010333">
    <property type="term" value="F:terpene synthase activity"/>
    <property type="evidence" value="ECO:0007669"/>
    <property type="project" value="InterPro"/>
</dbReference>
<dbReference type="GO" id="GO:0016102">
    <property type="term" value="P:diterpenoid biosynthetic process"/>
    <property type="evidence" value="ECO:0007669"/>
    <property type="project" value="InterPro"/>
</dbReference>
<dbReference type="GO" id="GO:0120251">
    <property type="term" value="P:hydrocarbon biosynthetic process"/>
    <property type="evidence" value="ECO:0007669"/>
    <property type="project" value="UniProtKB-ARBA"/>
</dbReference>
<dbReference type="CDD" id="cd00684">
    <property type="entry name" value="Terpene_cyclase_plant_C1"/>
    <property type="match status" value="1"/>
</dbReference>
<dbReference type="FunFam" id="1.10.600.10:FF:000007">
    <property type="entry name" value="Isoprene synthase, chloroplastic"/>
    <property type="match status" value="1"/>
</dbReference>
<dbReference type="Gene3D" id="1.10.600.10">
    <property type="entry name" value="Farnesyl Diphosphate Synthase"/>
    <property type="match status" value="1"/>
</dbReference>
<dbReference type="Gene3D" id="1.50.10.130">
    <property type="entry name" value="Terpene synthase, N-terminal domain"/>
    <property type="match status" value="1"/>
</dbReference>
<dbReference type="InterPro" id="IPR008949">
    <property type="entry name" value="Isoprenoid_synthase_dom_sf"/>
</dbReference>
<dbReference type="InterPro" id="IPR034741">
    <property type="entry name" value="Terpene_cyclase-like_1_C"/>
</dbReference>
<dbReference type="InterPro" id="IPR044814">
    <property type="entry name" value="Terpene_cyclase_plant_C1"/>
</dbReference>
<dbReference type="InterPro" id="IPR001906">
    <property type="entry name" value="Terpene_synth_N"/>
</dbReference>
<dbReference type="InterPro" id="IPR036965">
    <property type="entry name" value="Terpene_synth_N_sf"/>
</dbReference>
<dbReference type="InterPro" id="IPR050148">
    <property type="entry name" value="Terpene_synthase-like"/>
</dbReference>
<dbReference type="InterPro" id="IPR005630">
    <property type="entry name" value="Terpene_synthase_metal-bd"/>
</dbReference>
<dbReference type="InterPro" id="IPR008930">
    <property type="entry name" value="Terpenoid_cyclase/PrenylTrfase"/>
</dbReference>
<dbReference type="PANTHER" id="PTHR31225">
    <property type="entry name" value="OS04G0344100 PROTEIN-RELATED"/>
    <property type="match status" value="1"/>
</dbReference>
<dbReference type="PANTHER" id="PTHR31225:SF137">
    <property type="entry name" value="TERPENE SYNTHASE 11-RELATED"/>
    <property type="match status" value="1"/>
</dbReference>
<dbReference type="Pfam" id="PF01397">
    <property type="entry name" value="Terpene_synth"/>
    <property type="match status" value="1"/>
</dbReference>
<dbReference type="Pfam" id="PF03936">
    <property type="entry name" value="Terpene_synth_C"/>
    <property type="match status" value="1"/>
</dbReference>
<dbReference type="SFLD" id="SFLDS00005">
    <property type="entry name" value="Isoprenoid_Synthase_Type_I"/>
    <property type="match status" value="1"/>
</dbReference>
<dbReference type="SFLD" id="SFLDG01019">
    <property type="entry name" value="Terpene_Cyclase_Like_1_C_Termi"/>
    <property type="match status" value="1"/>
</dbReference>
<dbReference type="SUPFAM" id="SSF48239">
    <property type="entry name" value="Terpenoid cyclases/Protein prenyltransferases"/>
    <property type="match status" value="1"/>
</dbReference>
<dbReference type="SUPFAM" id="SSF48576">
    <property type="entry name" value="Terpenoid synthases"/>
    <property type="match status" value="1"/>
</dbReference>
<proteinExistence type="inferred from homology"/>
<accession>B9RHP7</accession>
<comment type="function">
    <text evidence="1">Probable sesquiterpene synthase.</text>
</comment>
<comment type="cofactor">
    <cofactor evidence="1">
        <name>Mg(2+)</name>
        <dbReference type="ChEBI" id="CHEBI:18420"/>
    </cofactor>
    <text evidence="1">Binds 3 Mg(2+) ions per subunit.</text>
</comment>
<comment type="domain">
    <text evidence="1">The Asp-Asp-Xaa-Xaa-Asp/Glu (DDXXD/E) motif is important for the catalytic activity, presumably through binding to Mg(2+).</text>
</comment>
<comment type="miscellaneous">
    <text evidence="3">Does not produce any detectable product when tested in vitro.</text>
</comment>
<comment type="similarity">
    <text evidence="2">Belongs to the terpene synthase family.</text>
</comment>
<feature type="chain" id="PRO_0000422209" description="Probable terpene synthase 11">
    <location>
        <begin position="1"/>
        <end position="572"/>
    </location>
</feature>
<feature type="short sequence motif" description="DDXXD motif">
    <location>
        <begin position="317"/>
        <end position="321"/>
    </location>
</feature>
<feature type="binding site" evidence="1">
    <location>
        <position position="317"/>
    </location>
    <ligand>
        <name>Mg(2+)</name>
        <dbReference type="ChEBI" id="CHEBI:18420"/>
        <label>1</label>
    </ligand>
</feature>
<feature type="binding site" evidence="1">
    <location>
        <position position="317"/>
    </location>
    <ligand>
        <name>Mg(2+)</name>
        <dbReference type="ChEBI" id="CHEBI:18420"/>
        <label>2</label>
    </ligand>
</feature>
<feature type="binding site" evidence="1">
    <location>
        <position position="321"/>
    </location>
    <ligand>
        <name>Mg(2+)</name>
        <dbReference type="ChEBI" id="CHEBI:18420"/>
        <label>1</label>
    </ligand>
</feature>
<feature type="binding site" evidence="1">
    <location>
        <position position="321"/>
    </location>
    <ligand>
        <name>Mg(2+)</name>
        <dbReference type="ChEBI" id="CHEBI:18420"/>
        <label>2</label>
    </ligand>
</feature>
<feature type="binding site" evidence="1">
    <location>
        <position position="469"/>
    </location>
    <ligand>
        <name>Mg(2+)</name>
        <dbReference type="ChEBI" id="CHEBI:18420"/>
        <label>3</label>
    </ligand>
</feature>
<protein>
    <recommendedName>
        <fullName>Probable terpene synthase 11</fullName>
        <shortName>RcSeTPS11</shortName>
        <ecNumber>4.2.3.-</ecNumber>
    </recommendedName>
</protein>
<gene>
    <name type="primary">TPS11</name>
    <name type="ORF">RCOM_1764780</name>
</gene>
<evidence type="ECO:0000250" key="1"/>
<evidence type="ECO:0000305" key="2"/>
<evidence type="ECO:0000305" key="3">
    <source>
    </source>
</evidence>